<comment type="function">
    <text>NDH-1 shuttles electrons from NADH, via FMN and iron-sulfur (Fe-S) centers, to quinones in the respiratory chain. The immediate electron acceptor for the enzyme in this species is believed to be ubiquinone. Couples the redox reaction to proton translocation (for every two electrons transferred, four hydrogen ions are translocated across the cytoplasmic membrane), and thus conserves the redox energy in a proton gradient.</text>
</comment>
<comment type="catalytic activity">
    <reaction evidence="1">
        <text>a quinone + NADH + 5 H(+)(in) = a quinol + NAD(+) + 4 H(+)(out)</text>
        <dbReference type="Rhea" id="RHEA:57888"/>
        <dbReference type="ChEBI" id="CHEBI:15378"/>
        <dbReference type="ChEBI" id="CHEBI:24646"/>
        <dbReference type="ChEBI" id="CHEBI:57540"/>
        <dbReference type="ChEBI" id="CHEBI:57945"/>
        <dbReference type="ChEBI" id="CHEBI:132124"/>
    </reaction>
</comment>
<comment type="subunit">
    <text>NDH-1 is composed of at least 14 different subunits, Nqo1 to Nqo14. The complex has a L-shaped structure, with the hydrophobic arm (subunits Nqo7, Nqo8, Nqo10 to Nqo14) embedded in the inner membrane and the hydrophilic peripheral arm (subunits Nqo1 to Nqo6, Nqo9) protruding into the bacterial cytoplasm. The hydrophilic domain contains all the redox centers.</text>
</comment>
<comment type="subcellular location">
    <subcellularLocation>
        <location>Cell inner membrane</location>
        <topology>Peripheral membrane protein</topology>
    </subcellularLocation>
</comment>
<comment type="similarity">
    <text evidence="1">Belongs to the complex I 30 kDa subunit family.</text>
</comment>
<evidence type="ECO:0000255" key="1">
    <source>
        <dbReference type="HAMAP-Rule" id="MF_01357"/>
    </source>
</evidence>
<evidence type="ECO:0000269" key="2">
    <source>
    </source>
</evidence>
<proteinExistence type="evidence at protein level"/>
<gene>
    <name type="primary">nqo5</name>
</gene>
<protein>
    <recommendedName>
        <fullName>NADH-quinone oxidoreductase chain 5</fullName>
        <ecNumber evidence="1">7.1.1.-</ecNumber>
    </recommendedName>
    <alternativeName>
        <fullName>NADH dehydrogenase I, chain 5</fullName>
    </alternativeName>
    <alternativeName>
        <fullName>NDH-1, chain 5</fullName>
    </alternativeName>
</protein>
<sequence>MSEALSDEALLELAEHIAVRRENDVISTQAVGELTVNATLSGVIGLIEFLRNDPNCRFSTLIDITAVDNPARPARFDVVYHLLSMYQNQRIRVKVQVREDELVPSLIGVFPGANWYEREVFDLFGILFSGHSDLRRILTDYGFRGHPLRKDFPTTGYVEVRWSDIEKRVVYEPVNLVQEYRQFDFLSPWEGAKYVLPGDEKAPEAKK</sequence>
<feature type="initiator methionine" description="Removed" evidence="2">
    <location>
        <position position="1"/>
    </location>
</feature>
<feature type="chain" id="PRO_0000118668" description="NADH-quinone oxidoreductase chain 5">
    <location>
        <begin position="2"/>
        <end position="207"/>
    </location>
</feature>
<keyword id="KW-0997">Cell inner membrane</keyword>
<keyword id="KW-1003">Cell membrane</keyword>
<keyword id="KW-0903">Direct protein sequencing</keyword>
<keyword id="KW-0472">Membrane</keyword>
<keyword id="KW-0520">NAD</keyword>
<keyword id="KW-0874">Quinone</keyword>
<keyword id="KW-1278">Translocase</keyword>
<keyword id="KW-0813">Transport</keyword>
<keyword id="KW-0830">Ubiquinone</keyword>
<dbReference type="EC" id="7.1.1.-" evidence="1"/>
<dbReference type="EMBL" id="M93015">
    <property type="protein sequence ID" value="AAA03037.1"/>
    <property type="status" value="ALT_SEQ"/>
    <property type="molecule type" value="Unassigned_DNA"/>
</dbReference>
<dbReference type="PIR" id="D42573">
    <property type="entry name" value="D42573"/>
</dbReference>
<dbReference type="RefSeq" id="WP_011748534.1">
    <property type="nucleotide sequence ID" value="NZ_PPGA01000003.1"/>
</dbReference>
<dbReference type="SMR" id="P29917"/>
<dbReference type="TCDB" id="3.D.1.2.1">
    <property type="family name" value="the h+ or na+-translocating nadh dehydrogenase (ndh) family"/>
</dbReference>
<dbReference type="GO" id="GO:0005886">
    <property type="term" value="C:plasma membrane"/>
    <property type="evidence" value="ECO:0007669"/>
    <property type="project" value="UniProtKB-SubCell"/>
</dbReference>
<dbReference type="GO" id="GO:0008137">
    <property type="term" value="F:NADH dehydrogenase (ubiquinone) activity"/>
    <property type="evidence" value="ECO:0007669"/>
    <property type="project" value="InterPro"/>
</dbReference>
<dbReference type="GO" id="GO:0050136">
    <property type="term" value="F:NADH:ubiquinone reductase (non-electrogenic) activity"/>
    <property type="evidence" value="ECO:0007669"/>
    <property type="project" value="UniProtKB-UniRule"/>
</dbReference>
<dbReference type="GO" id="GO:0048038">
    <property type="term" value="F:quinone binding"/>
    <property type="evidence" value="ECO:0007669"/>
    <property type="project" value="UniProtKB-KW"/>
</dbReference>
<dbReference type="Gene3D" id="3.30.460.80">
    <property type="entry name" value="NADH:ubiquinone oxidoreductase, 30kDa subunit"/>
    <property type="match status" value="1"/>
</dbReference>
<dbReference type="HAMAP" id="MF_01357">
    <property type="entry name" value="NDH1_NuoC"/>
    <property type="match status" value="1"/>
</dbReference>
<dbReference type="InterPro" id="IPR010218">
    <property type="entry name" value="NADH_DH_suC"/>
</dbReference>
<dbReference type="InterPro" id="IPR037232">
    <property type="entry name" value="NADH_quin_OxRdtase_su_C/D-like"/>
</dbReference>
<dbReference type="InterPro" id="IPR001268">
    <property type="entry name" value="NADH_UbQ_OxRdtase_30kDa_su"/>
</dbReference>
<dbReference type="InterPro" id="IPR020396">
    <property type="entry name" value="NADH_UbQ_OxRdtase_CS"/>
</dbReference>
<dbReference type="NCBIfam" id="TIGR01961">
    <property type="entry name" value="NuoC_fam"/>
    <property type="match status" value="1"/>
</dbReference>
<dbReference type="NCBIfam" id="NF004733">
    <property type="entry name" value="PRK06074.1-5"/>
    <property type="match status" value="1"/>
</dbReference>
<dbReference type="PANTHER" id="PTHR10884:SF14">
    <property type="entry name" value="NADH DEHYDROGENASE [UBIQUINONE] IRON-SULFUR PROTEIN 3, MITOCHONDRIAL"/>
    <property type="match status" value="1"/>
</dbReference>
<dbReference type="PANTHER" id="PTHR10884">
    <property type="entry name" value="NADH DEHYDROGENASE UBIQUINONE IRON-SULFUR PROTEIN 3"/>
    <property type="match status" value="1"/>
</dbReference>
<dbReference type="Pfam" id="PF00329">
    <property type="entry name" value="Complex1_30kDa"/>
    <property type="match status" value="1"/>
</dbReference>
<dbReference type="SUPFAM" id="SSF143243">
    <property type="entry name" value="Nqo5-like"/>
    <property type="match status" value="1"/>
</dbReference>
<dbReference type="PROSITE" id="PS00542">
    <property type="entry name" value="COMPLEX1_30K"/>
    <property type="match status" value="1"/>
</dbReference>
<organism>
    <name type="scientific">Paracoccus denitrificans</name>
    <dbReference type="NCBI Taxonomy" id="266"/>
    <lineage>
        <taxon>Bacteria</taxon>
        <taxon>Pseudomonadati</taxon>
        <taxon>Pseudomonadota</taxon>
        <taxon>Alphaproteobacteria</taxon>
        <taxon>Rhodobacterales</taxon>
        <taxon>Paracoccaceae</taxon>
        <taxon>Paracoccus</taxon>
    </lineage>
</organism>
<reference key="1">
    <citation type="journal article" date="1992" name="Biochemistry">
        <title>Gene cluster of the energy-transducing NADH-quinone oxidoreductase of Paracoccus denitrificans: characterization of four structural gene products.</title>
        <authorList>
            <person name="Xu X."/>
            <person name="Matsuno-Yagi A."/>
            <person name="Yagi T."/>
        </authorList>
    </citation>
    <scope>NUCLEOTIDE SEQUENCE [GENOMIC DNA]</scope>
    <scope>PROTEIN SEQUENCE OF 2-15</scope>
    <source>
        <strain>ATCC 13543 / NRRL B-3784 / NRC 449</strain>
    </source>
</reference>
<accession>P29917</accession>
<name>NQO5_PARDE</name>